<sequence length="399" mass="38839">MERGGYGGGSGQGYNNFAVPPPNYQQMPNKTGNYNEPPPNYGKQGGGYDSGSGHRGSGGSGNGGGGGGSWNDRGGNSYGNGGASKDSYNKGHGGYSGGGGGGGGGGGGGSGGNDMITQEDTIFVSGMDPSTTEQDIETHFGAIGIIKKDKRTMKPKIWLYKNKETGASKGEATVTYDDTNAAQSAIEWFDGRDFNGNAIKVSLAQRQNNWNKGGGGGGGGGGRGGFGGRRGGGGGGGGGGGGGGRFDRGGGGGGGRYDRGGGGGGGGGGGNVQPRDGDWKCNSCNNTNFAWRNECNRCKTPKGDDEGSSGGGGGGGYGGGGGGGGYDRGNDRGSGGGGYHNRDRGGNSQGGGGGGGGGGGYSRFNDNNGGGRGGRGGGGGNRRDGGPMRNDGGMRSRPY</sequence>
<name>CAZ_DROME</name>
<reference key="1">
    <citation type="journal article" date="1995" name="Mol. Cell. Biol.">
        <title>Association of SARFH (sarcoma-associated RNA-binding fly homolog) with regions of chromatin transcribed by RNA polymerase II.</title>
        <authorList>
            <person name="Immanuel D."/>
            <person name="Zinszner H."/>
            <person name="Ron D."/>
        </authorList>
    </citation>
    <scope>NUCLEOTIDE SEQUENCE [MRNA]</scope>
    <scope>FUNCTION</scope>
    <scope>SUBCELLULAR LOCATION</scope>
    <scope>DEVELOPMENTAL STAGE</scope>
    <scope>TISSUE SPECIFICITY</scope>
    <source>
        <strain>Canton-S</strain>
    </source>
</reference>
<reference key="2">
    <citation type="journal article" date="1995" name="Nucleic Acids Res.">
        <title>Cabeza, a Drosophila gene encoding a novel RNA binding protein, shares homology with EWS and TLS, two genes involved in human sarcoma formation.</title>
        <authorList>
            <person name="Stolow D.T."/>
            <person name="Haynes S.R."/>
        </authorList>
    </citation>
    <scope>NUCLEOTIDE SEQUENCE [MRNA]</scope>
    <scope>TISSUE SPECIFICITY</scope>
    <source>
        <strain>Canton-S</strain>
        <tissue>Pupae</tissue>
    </source>
</reference>
<reference key="3">
    <citation type="journal article" date="2000" name="Science">
        <title>The genome sequence of Drosophila melanogaster.</title>
        <authorList>
            <person name="Adams M.D."/>
            <person name="Celniker S.E."/>
            <person name="Holt R.A."/>
            <person name="Evans C.A."/>
            <person name="Gocayne J.D."/>
            <person name="Amanatides P.G."/>
            <person name="Scherer S.E."/>
            <person name="Li P.W."/>
            <person name="Hoskins R.A."/>
            <person name="Galle R.F."/>
            <person name="George R.A."/>
            <person name="Lewis S.E."/>
            <person name="Richards S."/>
            <person name="Ashburner M."/>
            <person name="Henderson S.N."/>
            <person name="Sutton G.G."/>
            <person name="Wortman J.R."/>
            <person name="Yandell M.D."/>
            <person name="Zhang Q."/>
            <person name="Chen L.X."/>
            <person name="Brandon R.C."/>
            <person name="Rogers Y.-H.C."/>
            <person name="Blazej R.G."/>
            <person name="Champe M."/>
            <person name="Pfeiffer B.D."/>
            <person name="Wan K.H."/>
            <person name="Doyle C."/>
            <person name="Baxter E.G."/>
            <person name="Helt G."/>
            <person name="Nelson C.R."/>
            <person name="Miklos G.L.G."/>
            <person name="Abril J.F."/>
            <person name="Agbayani A."/>
            <person name="An H.-J."/>
            <person name="Andrews-Pfannkoch C."/>
            <person name="Baldwin D."/>
            <person name="Ballew R.M."/>
            <person name="Basu A."/>
            <person name="Baxendale J."/>
            <person name="Bayraktaroglu L."/>
            <person name="Beasley E.M."/>
            <person name="Beeson K.Y."/>
            <person name="Benos P.V."/>
            <person name="Berman B.P."/>
            <person name="Bhandari D."/>
            <person name="Bolshakov S."/>
            <person name="Borkova D."/>
            <person name="Botchan M.R."/>
            <person name="Bouck J."/>
            <person name="Brokstein P."/>
            <person name="Brottier P."/>
            <person name="Burtis K.C."/>
            <person name="Busam D.A."/>
            <person name="Butler H."/>
            <person name="Cadieu E."/>
            <person name="Center A."/>
            <person name="Chandra I."/>
            <person name="Cherry J.M."/>
            <person name="Cawley S."/>
            <person name="Dahlke C."/>
            <person name="Davenport L.B."/>
            <person name="Davies P."/>
            <person name="de Pablos B."/>
            <person name="Delcher A."/>
            <person name="Deng Z."/>
            <person name="Mays A.D."/>
            <person name="Dew I."/>
            <person name="Dietz S.M."/>
            <person name="Dodson K."/>
            <person name="Doup L.E."/>
            <person name="Downes M."/>
            <person name="Dugan-Rocha S."/>
            <person name="Dunkov B.C."/>
            <person name="Dunn P."/>
            <person name="Durbin K.J."/>
            <person name="Evangelista C.C."/>
            <person name="Ferraz C."/>
            <person name="Ferriera S."/>
            <person name="Fleischmann W."/>
            <person name="Fosler C."/>
            <person name="Gabrielian A.E."/>
            <person name="Garg N.S."/>
            <person name="Gelbart W.M."/>
            <person name="Glasser K."/>
            <person name="Glodek A."/>
            <person name="Gong F."/>
            <person name="Gorrell J.H."/>
            <person name="Gu Z."/>
            <person name="Guan P."/>
            <person name="Harris M."/>
            <person name="Harris N.L."/>
            <person name="Harvey D.A."/>
            <person name="Heiman T.J."/>
            <person name="Hernandez J.R."/>
            <person name="Houck J."/>
            <person name="Hostin D."/>
            <person name="Houston K.A."/>
            <person name="Howland T.J."/>
            <person name="Wei M.-H."/>
            <person name="Ibegwam C."/>
            <person name="Jalali M."/>
            <person name="Kalush F."/>
            <person name="Karpen G.H."/>
            <person name="Ke Z."/>
            <person name="Kennison J.A."/>
            <person name="Ketchum K.A."/>
            <person name="Kimmel B.E."/>
            <person name="Kodira C.D."/>
            <person name="Kraft C.L."/>
            <person name="Kravitz S."/>
            <person name="Kulp D."/>
            <person name="Lai Z."/>
            <person name="Lasko P."/>
            <person name="Lei Y."/>
            <person name="Levitsky A.A."/>
            <person name="Li J.H."/>
            <person name="Li Z."/>
            <person name="Liang Y."/>
            <person name="Lin X."/>
            <person name="Liu X."/>
            <person name="Mattei B."/>
            <person name="McIntosh T.C."/>
            <person name="McLeod M.P."/>
            <person name="McPherson D."/>
            <person name="Merkulov G."/>
            <person name="Milshina N.V."/>
            <person name="Mobarry C."/>
            <person name="Morris J."/>
            <person name="Moshrefi A."/>
            <person name="Mount S.M."/>
            <person name="Moy M."/>
            <person name="Murphy B."/>
            <person name="Murphy L."/>
            <person name="Muzny D.M."/>
            <person name="Nelson D.L."/>
            <person name="Nelson D.R."/>
            <person name="Nelson K.A."/>
            <person name="Nixon K."/>
            <person name="Nusskern D.R."/>
            <person name="Pacleb J.M."/>
            <person name="Palazzolo M."/>
            <person name="Pittman G.S."/>
            <person name="Pan S."/>
            <person name="Pollard J."/>
            <person name="Puri V."/>
            <person name="Reese M.G."/>
            <person name="Reinert K."/>
            <person name="Remington K."/>
            <person name="Saunders R.D.C."/>
            <person name="Scheeler F."/>
            <person name="Shen H."/>
            <person name="Shue B.C."/>
            <person name="Siden-Kiamos I."/>
            <person name="Simpson M."/>
            <person name="Skupski M.P."/>
            <person name="Smith T.J."/>
            <person name="Spier E."/>
            <person name="Spradling A.C."/>
            <person name="Stapleton M."/>
            <person name="Strong R."/>
            <person name="Sun E."/>
            <person name="Svirskas R."/>
            <person name="Tector C."/>
            <person name="Turner R."/>
            <person name="Venter E."/>
            <person name="Wang A.H."/>
            <person name="Wang X."/>
            <person name="Wang Z.-Y."/>
            <person name="Wassarman D.A."/>
            <person name="Weinstock G.M."/>
            <person name="Weissenbach J."/>
            <person name="Williams S.M."/>
            <person name="Woodage T."/>
            <person name="Worley K.C."/>
            <person name="Wu D."/>
            <person name="Yang S."/>
            <person name="Yao Q.A."/>
            <person name="Ye J."/>
            <person name="Yeh R.-F."/>
            <person name="Zaveri J.S."/>
            <person name="Zhan M."/>
            <person name="Zhang G."/>
            <person name="Zhao Q."/>
            <person name="Zheng L."/>
            <person name="Zheng X.H."/>
            <person name="Zhong F.N."/>
            <person name="Zhong W."/>
            <person name="Zhou X."/>
            <person name="Zhu S.C."/>
            <person name="Zhu X."/>
            <person name="Smith H.O."/>
            <person name="Gibbs R.A."/>
            <person name="Myers E.W."/>
            <person name="Rubin G.M."/>
            <person name="Venter J.C."/>
        </authorList>
    </citation>
    <scope>NUCLEOTIDE SEQUENCE [LARGE SCALE GENOMIC DNA]</scope>
    <source>
        <strain>Berkeley</strain>
    </source>
</reference>
<reference key="4">
    <citation type="journal article" date="2002" name="Genome Biol.">
        <title>Annotation of the Drosophila melanogaster euchromatic genome: a systematic review.</title>
        <authorList>
            <person name="Misra S."/>
            <person name="Crosby M.A."/>
            <person name="Mungall C.J."/>
            <person name="Matthews B.B."/>
            <person name="Campbell K.S."/>
            <person name="Hradecky P."/>
            <person name="Huang Y."/>
            <person name="Kaminker J.S."/>
            <person name="Millburn G.H."/>
            <person name="Prochnik S.E."/>
            <person name="Smith C.D."/>
            <person name="Tupy J.L."/>
            <person name="Whitfield E.J."/>
            <person name="Bayraktaroglu L."/>
            <person name="Berman B.P."/>
            <person name="Bettencourt B.R."/>
            <person name="Celniker S.E."/>
            <person name="de Grey A.D.N.J."/>
            <person name="Drysdale R.A."/>
            <person name="Harris N.L."/>
            <person name="Richter J."/>
            <person name="Russo S."/>
            <person name="Schroeder A.J."/>
            <person name="Shu S.Q."/>
            <person name="Stapleton M."/>
            <person name="Yamada C."/>
            <person name="Ashburner M."/>
            <person name="Gelbart W.M."/>
            <person name="Rubin G.M."/>
            <person name="Lewis S.E."/>
        </authorList>
    </citation>
    <scope>GENOME REANNOTATION</scope>
    <source>
        <strain>Berkeley</strain>
    </source>
</reference>
<reference key="5">
    <citation type="submission" date="2003-02" db="EMBL/GenBank/DDBJ databases">
        <authorList>
            <person name="Stapleton M."/>
            <person name="Brokstein P."/>
            <person name="Hong L."/>
            <person name="Agbayani A."/>
            <person name="Carlson J.W."/>
            <person name="Champe M."/>
            <person name="Chavez C."/>
            <person name="Dorsett V."/>
            <person name="Dresnek D."/>
            <person name="Farfan D."/>
            <person name="Frise E."/>
            <person name="George R.A."/>
            <person name="Gonzalez M."/>
            <person name="Guarin H."/>
            <person name="Kronmiller B."/>
            <person name="Li P.W."/>
            <person name="Liao G."/>
            <person name="Miranda A."/>
            <person name="Mungall C.J."/>
            <person name="Nunoo J."/>
            <person name="Pacleb J.M."/>
            <person name="Paragas V."/>
            <person name="Park S."/>
            <person name="Patel S."/>
            <person name="Phouanenavong S."/>
            <person name="Wan K.H."/>
            <person name="Yu C."/>
            <person name="Lewis S.E."/>
            <person name="Rubin G.M."/>
            <person name="Celniker S.E."/>
        </authorList>
    </citation>
    <scope>NUCLEOTIDE SEQUENCE [LARGE SCALE MRNA]</scope>
    <source>
        <strain>Berkeley</strain>
        <tissue>Embryo</tissue>
    </source>
</reference>
<reference key="6">
    <citation type="submission" date="1988-04" db="EMBL/GenBank/DDBJ databases">
        <authorList>
            <person name="Haynes S.R."/>
        </authorList>
    </citation>
    <scope>NUCLEOTIDE SEQUENCE [MRNA] OF 39-399</scope>
    <source>
        <strain>Oregon-R</strain>
        <tissue>Pupae</tissue>
    </source>
</reference>
<reference key="7">
    <citation type="journal article" date="2002" name="Genome Biol.">
        <title>A Drosophila full-length cDNA resource.</title>
        <authorList>
            <person name="Stapleton M."/>
            <person name="Carlson J.W."/>
            <person name="Brokstein P."/>
            <person name="Yu C."/>
            <person name="Champe M."/>
            <person name="George R.A."/>
            <person name="Guarin H."/>
            <person name="Kronmiller B."/>
            <person name="Pacleb J.M."/>
            <person name="Park S."/>
            <person name="Wan K.H."/>
            <person name="Rubin G.M."/>
            <person name="Celniker S.E."/>
        </authorList>
    </citation>
    <scope>NUCLEOTIDE SEQUENCE [LARGE SCALE MRNA] OF 80-91</scope>
    <source>
        <strain>Berkeley</strain>
        <tissue>Ovary</tissue>
    </source>
</reference>
<reference key="8">
    <citation type="journal article" date="1987" name="Proc. Natl. Acad. Sci. U.S.A.">
        <title>Pen repeat sequences are GGN clusters and encode a glycine-rich domain in a Drosophila cDNA homologous to the rat helix destabilizing protein.</title>
        <authorList>
            <person name="Haynes S.R."/>
            <person name="Rebbert M.L."/>
            <person name="Mozer B.A."/>
            <person name="Forquignon F."/>
            <person name="Dawid I.B."/>
        </authorList>
    </citation>
    <scope>NUCLEOTIDE SEQUENCE [MRNA] OF 212-261</scope>
    <source>
        <strain>Oregon-R</strain>
    </source>
</reference>
<dbReference type="EMBL" id="U13178">
    <property type="protein sequence ID" value="AAA86955.1"/>
    <property type="molecule type" value="mRNA"/>
</dbReference>
<dbReference type="EMBL" id="L37083">
    <property type="protein sequence ID" value="AAC41563.1"/>
    <property type="molecule type" value="mRNA"/>
</dbReference>
<dbReference type="EMBL" id="AE014298">
    <property type="protein sequence ID" value="AAN09389.1"/>
    <property type="molecule type" value="Genomic_DNA"/>
</dbReference>
<dbReference type="EMBL" id="BT004875">
    <property type="protein sequence ID" value="AAO45231.1"/>
    <property type="molecule type" value="mRNA"/>
</dbReference>
<dbReference type="EMBL" id="M15765">
    <property type="protein sequence ID" value="AAA70425.1"/>
    <property type="molecule type" value="mRNA"/>
</dbReference>
<dbReference type="EMBL" id="AY094763">
    <property type="protein sequence ID" value="AAM11116.1"/>
    <property type="status" value="ALT_SEQ"/>
    <property type="molecule type" value="mRNA"/>
</dbReference>
<dbReference type="PIR" id="S54729">
    <property type="entry name" value="S54729"/>
</dbReference>
<dbReference type="RefSeq" id="NP_523365.2">
    <property type="nucleotide sequence ID" value="NM_078641.4"/>
</dbReference>
<dbReference type="SMR" id="Q27294"/>
<dbReference type="BioGRID" id="58928">
    <property type="interactions" value="17"/>
</dbReference>
<dbReference type="FunCoup" id="Q27294">
    <property type="interactions" value="503"/>
</dbReference>
<dbReference type="IntAct" id="Q27294">
    <property type="interactions" value="22"/>
</dbReference>
<dbReference type="STRING" id="7227.FBpp0073996"/>
<dbReference type="PaxDb" id="7227-FBpp0073996"/>
<dbReference type="DNASU" id="32587"/>
<dbReference type="EnsemblMetazoa" id="FBtr0074217">
    <property type="protein sequence ID" value="FBpp0073996"/>
    <property type="gene ID" value="FBgn0285954"/>
</dbReference>
<dbReference type="GeneID" id="32587"/>
<dbReference type="KEGG" id="dme:Dmel_CG3606"/>
<dbReference type="AGR" id="FB:FBgn0285954"/>
<dbReference type="CTD" id="32587"/>
<dbReference type="FlyBase" id="FBgn0285954">
    <property type="gene designation" value="caz"/>
</dbReference>
<dbReference type="VEuPathDB" id="VectorBase:FBgn0285954"/>
<dbReference type="eggNOG" id="KOG1995">
    <property type="taxonomic scope" value="Eukaryota"/>
</dbReference>
<dbReference type="GeneTree" id="ENSGT00940000169684"/>
<dbReference type="InParanoid" id="Q27294"/>
<dbReference type="OMA" id="SYSKGPM"/>
<dbReference type="OrthoDB" id="76445at2759"/>
<dbReference type="PhylomeDB" id="Q27294"/>
<dbReference type="Reactome" id="R-DME-674695">
    <property type="pathway name" value="RNA Polymerase II Pre-transcription Events"/>
</dbReference>
<dbReference type="Reactome" id="R-DME-6804756">
    <property type="pathway name" value="Regulation of TP53 Activity through Phosphorylation"/>
</dbReference>
<dbReference type="Reactome" id="R-DME-72163">
    <property type="pathway name" value="mRNA Splicing - Major Pathway"/>
</dbReference>
<dbReference type="Reactome" id="R-DME-72203">
    <property type="pathway name" value="Processing of Capped Intron-Containing Pre-mRNA"/>
</dbReference>
<dbReference type="Reactome" id="R-DME-73776">
    <property type="pathway name" value="RNA Polymerase II Promoter Escape"/>
</dbReference>
<dbReference type="Reactome" id="R-DME-73779">
    <property type="pathway name" value="RNA Polymerase II Transcription Pre-Initiation And Promoter Opening"/>
</dbReference>
<dbReference type="Reactome" id="R-DME-75953">
    <property type="pathway name" value="RNA Polymerase II Transcription Initiation"/>
</dbReference>
<dbReference type="Reactome" id="R-DME-76042">
    <property type="pathway name" value="RNA Polymerase II Transcription Initiation And Promoter Clearance"/>
</dbReference>
<dbReference type="SignaLink" id="Q27294"/>
<dbReference type="BioGRID-ORCS" id="32587">
    <property type="hits" value="0 hits in 3 CRISPR screens"/>
</dbReference>
<dbReference type="ChiTaRS" id="caz">
    <property type="organism name" value="fly"/>
</dbReference>
<dbReference type="GenomeRNAi" id="32587"/>
<dbReference type="PRO" id="PR:Q27294"/>
<dbReference type="Proteomes" id="UP000000803">
    <property type="component" value="Chromosome X"/>
</dbReference>
<dbReference type="Bgee" id="FBgn0285954">
    <property type="expression patterns" value="Expressed in eye disc (Drosophila) and 189 other cell types or tissues"/>
</dbReference>
<dbReference type="ExpressionAtlas" id="Q27294">
    <property type="expression patterns" value="baseline and differential"/>
</dbReference>
<dbReference type="GO" id="GO:0071013">
    <property type="term" value="C:catalytic step 2 spliceosome"/>
    <property type="evidence" value="ECO:0007005"/>
    <property type="project" value="FlyBase"/>
</dbReference>
<dbReference type="GO" id="GO:0005654">
    <property type="term" value="C:nucleoplasm"/>
    <property type="evidence" value="ECO:0000314"/>
    <property type="project" value="FlyBase"/>
</dbReference>
<dbReference type="GO" id="GO:0005634">
    <property type="term" value="C:nucleus"/>
    <property type="evidence" value="ECO:0000314"/>
    <property type="project" value="FlyBase"/>
</dbReference>
<dbReference type="GO" id="GO:0005669">
    <property type="term" value="C:transcription factor TFIID complex"/>
    <property type="evidence" value="ECO:0000250"/>
    <property type="project" value="FlyBase"/>
</dbReference>
<dbReference type="GO" id="GO:0003682">
    <property type="term" value="F:chromatin binding"/>
    <property type="evidence" value="ECO:0000314"/>
    <property type="project" value="FlyBase"/>
</dbReference>
<dbReference type="GO" id="GO:0003729">
    <property type="term" value="F:mRNA binding"/>
    <property type="evidence" value="ECO:0000250"/>
    <property type="project" value="FlyBase"/>
</dbReference>
<dbReference type="GO" id="GO:0003723">
    <property type="term" value="F:RNA binding"/>
    <property type="evidence" value="ECO:0000318"/>
    <property type="project" value="GO_Central"/>
</dbReference>
<dbReference type="GO" id="GO:0003712">
    <property type="term" value="F:transcription coregulator activity"/>
    <property type="evidence" value="ECO:0000318"/>
    <property type="project" value="GO_Central"/>
</dbReference>
<dbReference type="GO" id="GO:0008270">
    <property type="term" value="F:zinc ion binding"/>
    <property type="evidence" value="ECO:0007669"/>
    <property type="project" value="UniProtKB-KW"/>
</dbReference>
<dbReference type="GO" id="GO:0008344">
    <property type="term" value="P:adult locomotory behavior"/>
    <property type="evidence" value="ECO:0000315"/>
    <property type="project" value="FlyBase"/>
</dbReference>
<dbReference type="GO" id="GO:0048749">
    <property type="term" value="P:compound eye development"/>
    <property type="evidence" value="ECO:0000315"/>
    <property type="project" value="FlyBase"/>
</dbReference>
<dbReference type="GO" id="GO:0008345">
    <property type="term" value="P:larval locomotory behavior"/>
    <property type="evidence" value="ECO:0000315"/>
    <property type="project" value="FlyBase"/>
</dbReference>
<dbReference type="GO" id="GO:0000398">
    <property type="term" value="P:mRNA splicing, via spliceosome"/>
    <property type="evidence" value="ECO:0000305"/>
    <property type="project" value="FlyBase"/>
</dbReference>
<dbReference type="GO" id="GO:0045887">
    <property type="term" value="P:positive regulation of synaptic assembly at neuromuscular junction"/>
    <property type="evidence" value="ECO:0000315"/>
    <property type="project" value="FlyBase"/>
</dbReference>
<dbReference type="GO" id="GO:0006355">
    <property type="term" value="P:regulation of DNA-templated transcription"/>
    <property type="evidence" value="ECO:0007669"/>
    <property type="project" value="InterPro"/>
</dbReference>
<dbReference type="GO" id="GO:0051124">
    <property type="term" value="P:synaptic assembly at neuromuscular junction"/>
    <property type="evidence" value="ECO:0000315"/>
    <property type="project" value="FlyBase"/>
</dbReference>
<dbReference type="GO" id="GO:0006367">
    <property type="term" value="P:transcription initiation at RNA polymerase II promoter"/>
    <property type="evidence" value="ECO:0000250"/>
    <property type="project" value="FlyBase"/>
</dbReference>
<dbReference type="CDD" id="cd12534">
    <property type="entry name" value="RRM_SARFH"/>
    <property type="match status" value="1"/>
</dbReference>
<dbReference type="FunFam" id="4.10.1060.10:FF:000022">
    <property type="entry name" value="Cabeza, isoform D"/>
    <property type="match status" value="1"/>
</dbReference>
<dbReference type="Gene3D" id="3.30.70.330">
    <property type="match status" value="1"/>
</dbReference>
<dbReference type="Gene3D" id="4.10.1060.10">
    <property type="entry name" value="Zinc finger, RanBP2-type"/>
    <property type="match status" value="1"/>
</dbReference>
<dbReference type="InterPro" id="IPR012677">
    <property type="entry name" value="Nucleotide-bd_a/b_plait_sf"/>
</dbReference>
<dbReference type="InterPro" id="IPR035979">
    <property type="entry name" value="RBD_domain_sf"/>
</dbReference>
<dbReference type="InterPro" id="IPR000504">
    <property type="entry name" value="RRM_dom"/>
</dbReference>
<dbReference type="InterPro" id="IPR034870">
    <property type="entry name" value="TET_fam"/>
</dbReference>
<dbReference type="InterPro" id="IPR001876">
    <property type="entry name" value="Znf_RanBP2"/>
</dbReference>
<dbReference type="InterPro" id="IPR036443">
    <property type="entry name" value="Znf_RanBP2_sf"/>
</dbReference>
<dbReference type="PANTHER" id="PTHR23238">
    <property type="entry name" value="RNA BINDING PROTEIN"/>
    <property type="match status" value="1"/>
</dbReference>
<dbReference type="Pfam" id="PF00076">
    <property type="entry name" value="RRM_1"/>
    <property type="match status" value="1"/>
</dbReference>
<dbReference type="Pfam" id="PF00641">
    <property type="entry name" value="Zn_ribbon_RanBP"/>
    <property type="match status" value="1"/>
</dbReference>
<dbReference type="SMART" id="SM00360">
    <property type="entry name" value="RRM"/>
    <property type="match status" value="1"/>
</dbReference>
<dbReference type="SMART" id="SM00547">
    <property type="entry name" value="ZnF_RBZ"/>
    <property type="match status" value="1"/>
</dbReference>
<dbReference type="SUPFAM" id="SSF90209">
    <property type="entry name" value="Ran binding protein zinc finger-like"/>
    <property type="match status" value="1"/>
</dbReference>
<dbReference type="SUPFAM" id="SSF54928">
    <property type="entry name" value="RNA-binding domain, RBD"/>
    <property type="match status" value="1"/>
</dbReference>
<dbReference type="PROSITE" id="PS50102">
    <property type="entry name" value="RRM"/>
    <property type="match status" value="1"/>
</dbReference>
<dbReference type="PROSITE" id="PS01358">
    <property type="entry name" value="ZF_RANBP2_1"/>
    <property type="match status" value="1"/>
</dbReference>
<dbReference type="PROSITE" id="PS50199">
    <property type="entry name" value="ZF_RANBP2_2"/>
    <property type="match status" value="1"/>
</dbReference>
<feature type="chain" id="PRO_0000081498" description="RNA-binding protein cabeza">
    <location>
        <begin position="1"/>
        <end position="399"/>
    </location>
</feature>
<feature type="domain" description="RRM" evidence="1">
    <location>
        <begin position="120"/>
        <end position="206"/>
    </location>
</feature>
<feature type="zinc finger region" description="RanBP2-type" evidence="2">
    <location>
        <begin position="275"/>
        <end position="304"/>
    </location>
</feature>
<feature type="region of interest" description="Disordered" evidence="3">
    <location>
        <begin position="1"/>
        <end position="82"/>
    </location>
</feature>
<feature type="region of interest" description="Disordered" evidence="3">
    <location>
        <begin position="209"/>
        <end position="276"/>
    </location>
</feature>
<feature type="region of interest" description="Disordered" evidence="3">
    <location>
        <begin position="300"/>
        <end position="399"/>
    </location>
</feature>
<feature type="compositionally biased region" description="Gly residues" evidence="3">
    <location>
        <begin position="1"/>
        <end position="12"/>
    </location>
</feature>
<feature type="compositionally biased region" description="Polar residues" evidence="3">
    <location>
        <begin position="24"/>
        <end position="34"/>
    </location>
</feature>
<feature type="compositionally biased region" description="Gly residues" evidence="3">
    <location>
        <begin position="43"/>
        <end position="69"/>
    </location>
</feature>
<feature type="compositionally biased region" description="Gly residues" evidence="3">
    <location>
        <begin position="212"/>
        <end position="271"/>
    </location>
</feature>
<feature type="compositionally biased region" description="Gly residues" evidence="3">
    <location>
        <begin position="308"/>
        <end position="339"/>
    </location>
</feature>
<feature type="compositionally biased region" description="Gly residues" evidence="3">
    <location>
        <begin position="347"/>
        <end position="361"/>
    </location>
</feature>
<feature type="compositionally biased region" description="Gly residues" evidence="3">
    <location>
        <begin position="368"/>
        <end position="380"/>
    </location>
</feature>
<feature type="compositionally biased region" description="Low complexity" evidence="3">
    <location>
        <begin position="387"/>
        <end position="399"/>
    </location>
</feature>
<feature type="sequence conflict" description="In Ref. 6; AAA70425." evidence="6" ref="6">
    <original>PNY</original>
    <variation>LFI</variation>
    <location>
        <begin position="39"/>
        <end position="41"/>
    </location>
</feature>
<feature type="sequence conflict" description="In Ref. 1; AAA86955, 2; AAC41563 and 6; AAA70425." evidence="6" ref="1 2 6">
    <original>H</original>
    <variation>P</variation>
    <location>
        <position position="92"/>
    </location>
</feature>
<feature type="sequence conflict" description="In Ref. 1; AAA86955, 2; AAC41563 and 6; AAA70425." evidence="6" ref="1 2 6">
    <location>
        <position position="109"/>
    </location>
</feature>
<feature type="sequence conflict" description="In Ref. 1; AAA86955, 2; AAC41563 and 6; AAA70425." evidence="6" ref="1 2 6">
    <original>G</original>
    <variation>GGNGGGG</variation>
    <location>
        <position position="253"/>
    </location>
</feature>
<feature type="sequence conflict" description="In Ref. 6; AAA70425." evidence="6" ref="6">
    <original>D</original>
    <variation>E</variation>
    <location>
        <position position="278"/>
    </location>
</feature>
<feature type="sequence conflict" description="In Ref. 6; AAA70425." evidence="6" ref="6">
    <original>DGGPMRNDGG</original>
    <variation>MVDQEKRWS</variation>
    <location>
        <begin position="384"/>
        <end position="393"/>
    </location>
</feature>
<evidence type="ECO:0000255" key="1">
    <source>
        <dbReference type="PROSITE-ProRule" id="PRU00176"/>
    </source>
</evidence>
<evidence type="ECO:0000255" key="2">
    <source>
        <dbReference type="PROSITE-ProRule" id="PRU00322"/>
    </source>
</evidence>
<evidence type="ECO:0000256" key="3">
    <source>
        <dbReference type="SAM" id="MobiDB-lite"/>
    </source>
</evidence>
<evidence type="ECO:0000269" key="4">
    <source>
    </source>
</evidence>
<evidence type="ECO:0000269" key="5">
    <source>
    </source>
</evidence>
<evidence type="ECO:0000305" key="6"/>
<protein>
    <recommendedName>
        <fullName>RNA-binding protein cabeza</fullName>
    </recommendedName>
    <alternativeName>
        <fullName>P19</fullName>
    </alternativeName>
    <alternativeName>
        <fullName>Sarcoma-associated RNA-binding fly homolog</fullName>
    </alternativeName>
</protein>
<organism>
    <name type="scientific">Drosophila melanogaster</name>
    <name type="common">Fruit fly</name>
    <dbReference type="NCBI Taxonomy" id="7227"/>
    <lineage>
        <taxon>Eukaryota</taxon>
        <taxon>Metazoa</taxon>
        <taxon>Ecdysozoa</taxon>
        <taxon>Arthropoda</taxon>
        <taxon>Hexapoda</taxon>
        <taxon>Insecta</taxon>
        <taxon>Pterygota</taxon>
        <taxon>Neoptera</taxon>
        <taxon>Endopterygota</taxon>
        <taxon>Diptera</taxon>
        <taxon>Brachycera</taxon>
        <taxon>Muscomorpha</taxon>
        <taxon>Ephydroidea</taxon>
        <taxon>Drosophilidae</taxon>
        <taxon>Drosophila</taxon>
        <taxon>Sophophora</taxon>
    </lineage>
</organism>
<proteinExistence type="evidence at transcript level"/>
<comment type="function">
    <text evidence="4">May participate in a function common to the expression of most genes transcribed by RNA polymerase II.</text>
</comment>
<comment type="subcellular location">
    <subcellularLocation>
        <location evidence="4">Nucleus</location>
    </subcellularLocation>
</comment>
<comment type="tissue specificity">
    <text evidence="4 5">Ubiquitous. Enriched in the brain and central nervous system during embryogenesis. Enriched in the adult head. Embryos contain both isoforms A and B, whereas later in development (heads and torsos) only isoform B is detected.</text>
</comment>
<comment type="developmental stage">
    <text evidence="4">Expressed in the developing embryo from the earliest stages of cellularization and is subsequently found in many cell types.</text>
</comment>
<comment type="miscellaneous">
    <text>'Cabeza' means 'head' in Spanish.</text>
</comment>
<comment type="similarity">
    <text evidence="6">Belongs to the RRM TET family.</text>
</comment>
<comment type="sequence caution" evidence="6">
    <conflict type="erroneous translation">
        <sequence resource="EMBL-CDS" id="AAM11116"/>
    </conflict>
    <text>Wrong choice of frame.</text>
</comment>
<accession>Q27294</accession>
<accession>Q24445</accession>
<accession>Q8T3M2</accession>
<accession>Q9VXI4</accession>
<keyword id="KW-0479">Metal-binding</keyword>
<keyword id="KW-0539">Nucleus</keyword>
<keyword id="KW-1185">Reference proteome</keyword>
<keyword id="KW-0694">RNA-binding</keyword>
<keyword id="KW-0862">Zinc</keyword>
<keyword id="KW-0863">Zinc-finger</keyword>
<gene>
    <name type="primary">caz</name>
    <name type="synonym">SARFH</name>
    <name type="ORF">CG3606</name>
</gene>